<name>VP3_GFLV</name>
<comment type="miscellaneous">
    <text>This protein is encoded from a satellite RNA, called RNA3.</text>
</comment>
<comment type="similarity">
    <text evidence="2">Belongs to the nepovirus protein P3 family.</text>
</comment>
<organismHost>
    <name type="scientific">Vitis rupestris</name>
    <dbReference type="NCBI Taxonomy" id="103352"/>
</organismHost>
<organismHost>
    <name type="scientific">Vitis vinifera</name>
    <name type="common">Grape</name>
    <dbReference type="NCBI Taxonomy" id="29760"/>
</organismHost>
<reference key="1">
    <citation type="journal article" date="1989" name="J. Gen. Virol.">
        <title>The nucleotide sequence of satellite RNA in grapevine fanleaf virus, strain F13.</title>
        <authorList>
            <person name="Fuchs M."/>
            <person name="Pinck M."/>
            <person name="Serghini M.A."/>
            <person name="Ravelonandro M."/>
            <person name="Walter B."/>
            <person name="Pinck L."/>
        </authorList>
    </citation>
    <scope>NUCLEOTIDE SEQUENCE [GENOMIC RNA]</scope>
    <source>
        <strain>F13</strain>
    </source>
</reference>
<evidence type="ECO:0000256" key="1">
    <source>
        <dbReference type="SAM" id="MobiDB-lite"/>
    </source>
</evidence>
<evidence type="ECO:0000305" key="2"/>
<proteinExistence type="inferred from homology"/>
<sequence>MDSYVTVDPSFHSPRISLEILVPTKYAKLFTLKQLSRMLALSCKHRARQAANPVSKRTSRDRNGSKTMGQGPSAVAPQVSKGHNQQVDGGVCLAPVKSKRAVRREKRRTAAKKATNKAKTETKLVKKGGSSIHAPKAPKRTSYLSSLLSSPSGAKAKMGALSKPPQTKNAPDANEGGFTLTAITPAECRAEARRRFHPITGSSRGPYGFCTRSREGCGVCADCVEKKAHLDFNRSFDTIGTSRVIRVDSMMEEVAEDLASPSVLEPSGFWAPAEKQAPSGEGHSRRRCDVVTLARVTPVLRMLRKVDPTLVDNRLLWEAAFRTVFPQRKCVYPHGCFCDRG</sequence>
<feature type="chain" id="PRO_0000105575" description="Protein P3">
    <location>
        <begin position="1"/>
        <end position="341"/>
    </location>
</feature>
<feature type="region of interest" description="Disordered" evidence="1">
    <location>
        <begin position="46"/>
        <end position="175"/>
    </location>
</feature>
<feature type="compositionally biased region" description="Basic residues" evidence="1">
    <location>
        <begin position="97"/>
        <end position="116"/>
    </location>
</feature>
<feature type="compositionally biased region" description="Low complexity" evidence="1">
    <location>
        <begin position="142"/>
        <end position="152"/>
    </location>
</feature>
<dbReference type="EMBL" id="D00442">
    <property type="protein sequence ID" value="BAA00343.1"/>
    <property type="molecule type" value="Genomic_RNA"/>
</dbReference>
<dbReference type="PIR" id="A92804">
    <property type="entry name" value="P3VVGF"/>
</dbReference>
<dbReference type="SMR" id="P17768"/>
<dbReference type="KEGG" id="vg:922275"/>
<dbReference type="Proteomes" id="UP000009160">
    <property type="component" value="Genome"/>
</dbReference>
<organism>
    <name type="scientific">Grapevine fanleaf virus</name>
    <name type="common">GFLV</name>
    <dbReference type="NCBI Taxonomy" id="12274"/>
    <lineage>
        <taxon>Viruses</taxon>
        <taxon>Riboviria</taxon>
        <taxon>Orthornavirae</taxon>
        <taxon>Pisuviricota</taxon>
        <taxon>Pisoniviricetes</taxon>
        <taxon>Picornavirales</taxon>
        <taxon>Secoviridae</taxon>
        <taxon>Comovirinae</taxon>
        <taxon>Nepovirus</taxon>
        <taxon>Nepovirus foliumflabelli</taxon>
    </lineage>
</organism>
<accession>P17768</accession>
<protein>
    <recommendedName>
        <fullName>Protein P3</fullName>
    </recommendedName>
</protein>